<protein>
    <recommendedName>
        <fullName>Carboxy-terminal domain RNA polymerase II polypeptide A small phosphatase 1</fullName>
        <ecNumber evidence="4 7">3.1.3.16</ecNumber>
    </recommendedName>
    <alternativeName>
        <fullName>Nuclear LIM interactor-interacting factor 3</fullName>
        <shortName>NLI-IF</shortName>
        <shortName>NLI-interacting factor 3</shortName>
    </alternativeName>
    <alternativeName>
        <fullName>Small C-terminal domain phosphatase 1</fullName>
        <shortName>SCP1</shortName>
        <shortName>Small CTD phosphatase 1</shortName>
    </alternativeName>
</protein>
<comment type="function">
    <text evidence="4 6">Preferentially catalyzes the dephosphorylation of 'Ser-5' within the tandem 7 residue repeats in the C-terminal domain (CTD) of the largest RNA polymerase II subunit POLR2A. Negatively regulates RNA polymerase II transcription, possibly by controlling the transition from initiation/capping to processive transcript elongation. Recruited by REST to neuronal genes that contain RE-1 elements, leading to neuronal gene silencing in non-neuronal cells.</text>
</comment>
<comment type="catalytic activity">
    <reaction evidence="4 7">
        <text>O-phospho-L-seryl-[protein] + H2O = L-seryl-[protein] + phosphate</text>
        <dbReference type="Rhea" id="RHEA:20629"/>
        <dbReference type="Rhea" id="RHEA-COMP:9863"/>
        <dbReference type="Rhea" id="RHEA-COMP:11604"/>
        <dbReference type="ChEBI" id="CHEBI:15377"/>
        <dbReference type="ChEBI" id="CHEBI:29999"/>
        <dbReference type="ChEBI" id="CHEBI:43474"/>
        <dbReference type="ChEBI" id="CHEBI:83421"/>
        <dbReference type="EC" id="3.1.3.16"/>
    </reaction>
</comment>
<comment type="catalytic activity">
    <reaction evidence="4 7">
        <text>O-phospho-L-threonyl-[protein] + H2O = L-threonyl-[protein] + phosphate</text>
        <dbReference type="Rhea" id="RHEA:47004"/>
        <dbReference type="Rhea" id="RHEA-COMP:11060"/>
        <dbReference type="Rhea" id="RHEA-COMP:11605"/>
        <dbReference type="ChEBI" id="CHEBI:15377"/>
        <dbReference type="ChEBI" id="CHEBI:30013"/>
        <dbReference type="ChEBI" id="CHEBI:43474"/>
        <dbReference type="ChEBI" id="CHEBI:61977"/>
        <dbReference type="EC" id="3.1.3.16"/>
    </reaction>
</comment>
<comment type="cofactor">
    <cofactor evidence="4">
        <name>Mg(2+)</name>
        <dbReference type="ChEBI" id="CHEBI:18420"/>
    </cofactor>
    <text evidence="5 7">Binds 1 Mg(2+) ion per monomer.</text>
</comment>
<comment type="activity regulation">
    <text evidence="4">Stimulated by GTF2F1. Inhibited by beryllofluoride anions.</text>
</comment>
<comment type="biophysicochemical properties">
    <phDependence>
        <text evidence="4">Optimum pH is 5.</text>
    </phDependence>
</comment>
<comment type="subunit">
    <text evidence="1 4 5 6 7">Monomer (By similarity). Interacts with GTF2F1. Interacts with REST.</text>
</comment>
<comment type="interaction">
    <interactant intactId="EBI-751587">
        <id>Q9GZU7</id>
    </interactant>
    <interactant intactId="EBI-2880652">
        <id>Q08043</id>
        <label>ACTN3</label>
    </interactant>
    <organismsDiffer>false</organismsDiffer>
    <experiments>3</experiments>
</comment>
<comment type="interaction">
    <interactant intactId="EBI-751587">
        <id>Q9GZU7</id>
    </interactant>
    <interactant intactId="EBI-747185">
        <id>O95817</id>
        <label>BAG3</label>
    </interactant>
    <organismsDiffer>false</organismsDiffer>
    <experiments>3</experiments>
</comment>
<comment type="interaction">
    <interactant intactId="EBI-751587">
        <id>Q9GZU7</id>
    </interactant>
    <interactant intactId="EBI-739534">
        <id>Q99618</id>
        <label>CDCA3</label>
    </interactant>
    <organismsDiffer>false</organismsDiffer>
    <experiments>14</experiments>
</comment>
<comment type="interaction">
    <interactant intactId="EBI-751587">
        <id>Q9GZU7</id>
    </interactant>
    <interactant intactId="EBI-711290">
        <id>P42773</id>
        <label>CDKN2C</label>
    </interactant>
    <organismsDiffer>false</organismsDiffer>
    <experiments>3</experiments>
</comment>
<comment type="interaction">
    <interactant intactId="EBI-751587">
        <id>Q9GZU7</id>
    </interactant>
    <interactant intactId="EBI-750444">
        <id>P53672</id>
        <label>CRYBA2</label>
    </interactant>
    <organismsDiffer>false</organismsDiffer>
    <experiments>3</experiments>
</comment>
<comment type="interaction">
    <interactant intactId="EBI-751587">
        <id>Q9GZU7</id>
    </interactant>
    <interactant intactId="EBI-747012">
        <id>Q9H0L4</id>
        <label>CSTF2T</label>
    </interactant>
    <organismsDiffer>false</organismsDiffer>
    <experiments>3</experiments>
</comment>
<comment type="interaction">
    <interactant intactId="EBI-751587">
        <id>Q9GZU7</id>
    </interactant>
    <interactant intactId="EBI-12013806">
        <id>Q6NZ36-4</id>
        <label>FAAP20</label>
    </interactant>
    <organismsDiffer>false</organismsDiffer>
    <experiments>3</experiments>
</comment>
<comment type="interaction">
    <interactant intactId="EBI-751587">
        <id>Q9GZU7</id>
    </interactant>
    <interactant intactId="EBI-1752811">
        <id>Q9BQ89</id>
        <label>FAM110A</label>
    </interactant>
    <organismsDiffer>false</organismsDiffer>
    <experiments>3</experiments>
</comment>
<comment type="interaction">
    <interactant intactId="EBI-751587">
        <id>Q9GZU7</id>
    </interactant>
    <interactant intactId="EBI-2339898">
        <id>Q9NW38</id>
        <label>FANCL</label>
    </interactant>
    <organismsDiffer>false</organismsDiffer>
    <experiments>3</experiments>
</comment>
<comment type="interaction">
    <interactant intactId="EBI-751587">
        <id>Q9GZU7</id>
    </interactant>
    <interactant intactId="EBI-751388">
        <id>P27987</id>
        <label>ITPKB</label>
    </interactant>
    <organismsDiffer>false</organismsDiffer>
    <experiments>5</experiments>
</comment>
<comment type="interaction">
    <interactant intactId="EBI-751587">
        <id>Q9GZU7</id>
    </interactant>
    <interactant intactId="EBI-13287659">
        <id>P06239-3</id>
        <label>LCK</label>
    </interactant>
    <organismsDiffer>false</organismsDiffer>
    <experiments>3</experiments>
</comment>
<comment type="interaction">
    <interactant intactId="EBI-751587">
        <id>Q9GZU7</id>
    </interactant>
    <interactant intactId="EBI-947402">
        <id>O60336</id>
        <label>MAPKBP1</label>
    </interactant>
    <organismsDiffer>false</organismsDiffer>
    <experiments>3</experiments>
</comment>
<comment type="interaction">
    <interactant intactId="EBI-751587">
        <id>Q9GZU7</id>
    </interactant>
    <interactant intactId="EBI-947410">
        <id>P02686</id>
        <label>MBP</label>
    </interactant>
    <organismsDiffer>false</organismsDiffer>
    <experiments>6</experiments>
</comment>
<comment type="interaction">
    <interactant intactId="EBI-751587">
        <id>Q9GZU7</id>
    </interactant>
    <interactant intactId="EBI-12159027">
        <id>P02686-2</id>
        <label>MBP</label>
    </interactant>
    <organismsDiffer>false</organismsDiffer>
    <experiments>4</experiments>
</comment>
<comment type="interaction">
    <interactant intactId="EBI-751587">
        <id>Q9GZU7</id>
    </interactant>
    <interactant intactId="EBI-9675802">
        <id>Q6PF18</id>
        <label>MORN3</label>
    </interactant>
    <organismsDiffer>false</organismsDiffer>
    <experiments>3</experiments>
</comment>
<comment type="interaction">
    <interactant intactId="EBI-751587">
        <id>Q9GZU7</id>
    </interactant>
    <interactant intactId="EBI-12025760">
        <id>Q86UR1-2</id>
        <label>NOXA1</label>
    </interactant>
    <organismsDiffer>false</organismsDiffer>
    <experiments>3</experiments>
</comment>
<comment type="interaction">
    <interactant intactId="EBI-751587">
        <id>Q9GZU7</id>
    </interactant>
    <interactant intactId="EBI-10239064">
        <id>Q17RL8</id>
        <label>PDZD4</label>
    </interactant>
    <organismsDiffer>false</organismsDiffer>
    <experiments>3</experiments>
</comment>
<comment type="interaction">
    <interactant intactId="EBI-751587">
        <id>Q9GZU7</id>
    </interactant>
    <interactant intactId="EBI-302345">
        <id>Q8ND90</id>
        <label>PNMA1</label>
    </interactant>
    <organismsDiffer>false</organismsDiffer>
    <experiments>2</experiments>
</comment>
<comment type="interaction">
    <interactant intactId="EBI-751587">
        <id>Q9GZU7</id>
    </interactant>
    <interactant intactId="EBI-743796">
        <id>Q8TBN0</id>
        <label>RAB3IL1</label>
    </interactant>
    <organismsDiffer>false</organismsDiffer>
    <experiments>3</experiments>
</comment>
<comment type="interaction">
    <interactant intactId="EBI-751587">
        <id>Q9GZU7</id>
    </interactant>
    <interactant intactId="EBI-12000762">
        <id>Q7Z5V6-2</id>
        <label>SAXO4</label>
    </interactant>
    <organismsDiffer>false</organismsDiffer>
    <experiments>3</experiments>
</comment>
<comment type="interaction">
    <interactant intactId="EBI-751587">
        <id>Q9GZU7</id>
    </interactant>
    <interactant intactId="EBI-748391">
        <id>Q9BWG6</id>
        <label>SCNM1</label>
    </interactant>
    <organismsDiffer>false</organismsDiffer>
    <experiments>3</experiments>
</comment>
<comment type="interaction">
    <interactant intactId="EBI-751587">
        <id>Q9GZU7</id>
    </interactant>
    <interactant intactId="EBI-727004">
        <id>O00560</id>
        <label>SDCBP</label>
    </interactant>
    <organismsDiffer>false</organismsDiffer>
    <experiments>3</experiments>
</comment>
<comment type="interaction">
    <interactant intactId="EBI-751587">
        <id>Q9GZU7</id>
    </interactant>
    <interactant intactId="EBI-1567153">
        <id>Q15797</id>
        <label>SMAD1</label>
    </interactant>
    <organismsDiffer>false</organismsDiffer>
    <experiments>2</experiments>
</comment>
<comment type="interaction">
    <interactant intactId="EBI-751587">
        <id>Q9GZU7</id>
    </interactant>
    <interactant intactId="EBI-12036261">
        <id>Q7Z7C7</id>
        <label>STRA8</label>
    </interactant>
    <organismsDiffer>false</organismsDiffer>
    <experiments>3</experiments>
</comment>
<comment type="interaction">
    <interactant intactId="EBI-751587">
        <id>Q9GZU7</id>
    </interactant>
    <interactant intactId="EBI-750487">
        <id>Q8WW24</id>
        <label>TEKT4</label>
    </interactant>
    <organismsDiffer>false</organismsDiffer>
    <experiments>3</experiments>
</comment>
<comment type="interaction">
    <interactant intactId="EBI-751587">
        <id>Q9GZU7</id>
    </interactant>
    <interactant intactId="EBI-8451480">
        <id>O75865-2</id>
        <label>TRAPPC6A</label>
    </interactant>
    <organismsDiffer>false</organismsDiffer>
    <experiments>3</experiments>
</comment>
<comment type="interaction">
    <interactant intactId="EBI-751587">
        <id>Q9GZU7</id>
    </interactant>
    <interactant intactId="EBI-12040603">
        <id>Q9NZC7-5</id>
        <label>WWOX</label>
    </interactant>
    <organismsDiffer>false</organismsDiffer>
    <experiments>3</experiments>
</comment>
<comment type="interaction">
    <interactant intactId="EBI-751587">
        <id>Q9GZU7</id>
    </interactant>
    <interactant intactId="EBI-11721624">
        <id>P62699</id>
        <label>YPEL5</label>
    </interactant>
    <organismsDiffer>false</organismsDiffer>
    <experiments>3</experiments>
</comment>
<comment type="interaction">
    <interactant intactId="EBI-751587">
        <id>Q9GZU7</id>
    </interactant>
    <interactant intactId="EBI-711925">
        <id>Q05516</id>
        <label>ZBTB16</label>
    </interactant>
    <organismsDiffer>false</organismsDiffer>
    <experiments>3</experiments>
</comment>
<comment type="interaction">
    <interactant intactId="EBI-751587">
        <id>Q9GZU7</id>
    </interactant>
    <interactant intactId="EBI-7091612">
        <id>P58466</id>
        <label>Ctdsp1</label>
    </interactant>
    <organismsDiffer>true</organismsDiffer>
    <experiments>2</experiments>
</comment>
<comment type="subcellular location">
    <subcellularLocation>
        <location evidence="4">Nucleus</location>
    </subcellularLocation>
    <text>Colocalizes with RNA polymerase II.</text>
</comment>
<comment type="alternative products">
    <event type="alternative splicing"/>
    <isoform>
        <id>Q9GZU7-1</id>
        <name>1</name>
        <sequence type="displayed"/>
    </isoform>
    <isoform>
        <id>Q9GZU7-2</id>
        <name>2</name>
        <sequence type="described" ref="VSP_045866"/>
    </isoform>
    <isoform>
        <id>Q9GZU7-3</id>
        <name>3</name>
        <sequence type="described" ref="VSP_045865 VSP_045866"/>
    </isoform>
</comment>
<comment type="tissue specificity">
    <text evidence="6">Expression is restricted to non-neuronal tissues. Highest expression in skeletal muscle, spleen, lung and placenta.</text>
</comment>
<comment type="sequence caution" evidence="10">
    <conflict type="frameshift">
        <sequence resource="EMBL-CDS" id="AAP34398"/>
    </conflict>
</comment>
<gene>
    <name type="primary">CTDSP1</name>
    <name type="synonym">NIF3</name>
    <name type="synonym">NLIIF</name>
    <name type="synonym">SCP1</name>
</gene>
<reference key="1">
    <citation type="journal article" date="2000" name="Mamm. Genome">
        <title>Complete nucleotide sequence and genomic structure of the human NRAMP1 gene region on chromosome region 2q35.</title>
        <authorList>
            <person name="Marquet S."/>
            <person name="Lepage P."/>
            <person name="Hudson T.J."/>
            <person name="Musser J.M."/>
            <person name="Schurr E."/>
        </authorList>
    </citation>
    <scope>NUCLEOTIDE SEQUENCE [GENOMIC DNA / MRNA] (ISOFORM 1)</scope>
</reference>
<reference key="2">
    <citation type="journal article" date="2003" name="J. Biol. Chem.">
        <title>A novel RNA polymerase II C-terminal domain phosphatase that preferentially dephosphorylates serine 5.</title>
        <authorList>
            <person name="Yeo M."/>
            <person name="Lin P.S."/>
            <person name="Dahmus M.E."/>
            <person name="Gill G.N."/>
        </authorList>
    </citation>
    <scope>NUCLEOTIDE SEQUENCE [MRNA] (ISOFORM 1)</scope>
    <scope>NUCLEOTIDE SEQUENCE [MRNA] OF 50-260 (ISOFORM 2)</scope>
    <scope>FUNCTION</scope>
    <scope>CATALYTIC ACTIVITY</scope>
    <scope>COFACTOR</scope>
    <scope>ACTIVITY REGULATION</scope>
    <scope>BIOPHYSICOCHEMICAL PROPERTIES</scope>
    <scope>INTERACTION WITH GTF2F1</scope>
    <scope>SUBCELLULAR LOCATION</scope>
    <scope>MUTAGENESIS OF ASP-96 AND ASP-98</scope>
</reference>
<reference key="3">
    <citation type="submission" date="2003-04" db="EMBL/GenBank/DDBJ databases">
        <title>Full-length cDNA libraries and normalization.</title>
        <authorList>
            <person name="Li W.B."/>
            <person name="Gruber C."/>
            <person name="Jessee J."/>
            <person name="Polayes D."/>
        </authorList>
    </citation>
    <scope>NUCLEOTIDE SEQUENCE [LARGE SCALE MRNA] (ISOFORM 3)</scope>
    <source>
        <tissue>Placenta</tissue>
    </source>
</reference>
<reference key="4">
    <citation type="journal article" date="2005" name="Nature">
        <title>Generation and annotation of the DNA sequences of human chromosomes 2 and 4.</title>
        <authorList>
            <person name="Hillier L.W."/>
            <person name="Graves T.A."/>
            <person name="Fulton R.S."/>
            <person name="Fulton L.A."/>
            <person name="Pepin K.H."/>
            <person name="Minx P."/>
            <person name="Wagner-McPherson C."/>
            <person name="Layman D."/>
            <person name="Wylie K."/>
            <person name="Sekhon M."/>
            <person name="Becker M.C."/>
            <person name="Fewell G.A."/>
            <person name="Delehaunty K.D."/>
            <person name="Miner T.L."/>
            <person name="Nash W.E."/>
            <person name="Kremitzki C."/>
            <person name="Oddy L."/>
            <person name="Du H."/>
            <person name="Sun H."/>
            <person name="Bradshaw-Cordum H."/>
            <person name="Ali J."/>
            <person name="Carter J."/>
            <person name="Cordes M."/>
            <person name="Harris A."/>
            <person name="Isak A."/>
            <person name="van Brunt A."/>
            <person name="Nguyen C."/>
            <person name="Du F."/>
            <person name="Courtney L."/>
            <person name="Kalicki J."/>
            <person name="Ozersky P."/>
            <person name="Abbott S."/>
            <person name="Armstrong J."/>
            <person name="Belter E.A."/>
            <person name="Caruso L."/>
            <person name="Cedroni M."/>
            <person name="Cotton M."/>
            <person name="Davidson T."/>
            <person name="Desai A."/>
            <person name="Elliott G."/>
            <person name="Erb T."/>
            <person name="Fronick C."/>
            <person name="Gaige T."/>
            <person name="Haakenson W."/>
            <person name="Haglund K."/>
            <person name="Holmes A."/>
            <person name="Harkins R."/>
            <person name="Kim K."/>
            <person name="Kruchowski S.S."/>
            <person name="Strong C.M."/>
            <person name="Grewal N."/>
            <person name="Goyea E."/>
            <person name="Hou S."/>
            <person name="Levy A."/>
            <person name="Martinka S."/>
            <person name="Mead K."/>
            <person name="McLellan M.D."/>
            <person name="Meyer R."/>
            <person name="Randall-Maher J."/>
            <person name="Tomlinson C."/>
            <person name="Dauphin-Kohlberg S."/>
            <person name="Kozlowicz-Reilly A."/>
            <person name="Shah N."/>
            <person name="Swearengen-Shahid S."/>
            <person name="Snider J."/>
            <person name="Strong J.T."/>
            <person name="Thompson J."/>
            <person name="Yoakum M."/>
            <person name="Leonard S."/>
            <person name="Pearman C."/>
            <person name="Trani L."/>
            <person name="Radionenko M."/>
            <person name="Waligorski J.E."/>
            <person name="Wang C."/>
            <person name="Rock S.M."/>
            <person name="Tin-Wollam A.-M."/>
            <person name="Maupin R."/>
            <person name="Latreille P."/>
            <person name="Wendl M.C."/>
            <person name="Yang S.-P."/>
            <person name="Pohl C."/>
            <person name="Wallis J.W."/>
            <person name="Spieth J."/>
            <person name="Bieri T.A."/>
            <person name="Berkowicz N."/>
            <person name="Nelson J.O."/>
            <person name="Osborne J."/>
            <person name="Ding L."/>
            <person name="Meyer R."/>
            <person name="Sabo A."/>
            <person name="Shotland Y."/>
            <person name="Sinha P."/>
            <person name="Wohldmann P.E."/>
            <person name="Cook L.L."/>
            <person name="Hickenbotham M.T."/>
            <person name="Eldred J."/>
            <person name="Williams D."/>
            <person name="Jones T.A."/>
            <person name="She X."/>
            <person name="Ciccarelli F.D."/>
            <person name="Izaurralde E."/>
            <person name="Taylor J."/>
            <person name="Schmutz J."/>
            <person name="Myers R.M."/>
            <person name="Cox D.R."/>
            <person name="Huang X."/>
            <person name="McPherson J.D."/>
            <person name="Mardis E.R."/>
            <person name="Clifton S.W."/>
            <person name="Warren W.C."/>
            <person name="Chinwalla A.T."/>
            <person name="Eddy S.R."/>
            <person name="Marra M.A."/>
            <person name="Ovcharenko I."/>
            <person name="Furey T.S."/>
            <person name="Miller W."/>
            <person name="Eichler E.E."/>
            <person name="Bork P."/>
            <person name="Suyama M."/>
            <person name="Torrents D."/>
            <person name="Waterston R.H."/>
            <person name="Wilson R.K."/>
        </authorList>
    </citation>
    <scope>NUCLEOTIDE SEQUENCE [LARGE SCALE GENOMIC DNA]</scope>
</reference>
<reference key="5">
    <citation type="journal article" date="2004" name="Genome Res.">
        <title>The status, quality, and expansion of the NIH full-length cDNA project: the Mammalian Gene Collection (MGC).</title>
        <authorList>
            <consortium name="The MGC Project Team"/>
        </authorList>
    </citation>
    <scope>NUCLEOTIDE SEQUENCE [LARGE SCALE MRNA] (ISOFORM 1)</scope>
    <source>
        <tissue>Lymph</tissue>
    </source>
</reference>
<reference key="6">
    <citation type="journal article" date="2005" name="Science">
        <title>Small CTD phosphatases function in silencing neuronal gene expression.</title>
        <authorList>
            <person name="Yeo M."/>
            <person name="Lee S.-K."/>
            <person name="Lee B."/>
            <person name="Ruiz E.C."/>
            <person name="Pfaff S.L."/>
            <person name="Gill G.N."/>
        </authorList>
    </citation>
    <scope>FUNCTION</scope>
    <scope>TISSUE SPECIFICITY</scope>
    <scope>INTERACTION WITH REST</scope>
</reference>
<reference key="7">
    <citation type="journal article" date="2012" name="Proc. Natl. Acad. Sci. U.S.A.">
        <title>N-terminal acetylome analyses and functional insights of the N-terminal acetyltransferase NatB.</title>
        <authorList>
            <person name="Van Damme P."/>
            <person name="Lasa M."/>
            <person name="Polevoda B."/>
            <person name="Gazquez C."/>
            <person name="Elosegui-Artola A."/>
            <person name="Kim D.S."/>
            <person name="De Juan-Pardo E."/>
            <person name="Demeyer K."/>
            <person name="Hole K."/>
            <person name="Larrea E."/>
            <person name="Timmerman E."/>
            <person name="Prieto J."/>
            <person name="Arnesen T."/>
            <person name="Sherman F."/>
            <person name="Gevaert K."/>
            <person name="Aldabe R."/>
        </authorList>
    </citation>
    <scope>ACETYLATION [LARGE SCALE ANALYSIS] AT MET-1</scope>
    <scope>IDENTIFICATION BY MASS SPECTROMETRY [LARGE SCALE ANALYSIS]</scope>
</reference>
<reference key="8">
    <citation type="journal article" date="2004" name="Mol. Cell">
        <title>Structure and mechanism of RNA polymerase II CTD phosphatases.</title>
        <authorList>
            <person name="Kamenski T."/>
            <person name="Heilmeier S."/>
            <person name="Meinhart A."/>
            <person name="Cramer P."/>
        </authorList>
    </citation>
    <scope>X-RAY CRYSTALLOGRAPHY (2.1 ANGSTROMS) OF 77-261 IN COMPLEX WITH MAGNESIUM AND INHIBITOR</scope>
    <scope>ACTIVE SITE</scope>
</reference>
<reference key="9">
    <citation type="journal article" date="2006" name="Mol. Cell">
        <title>Determinants for dephosphorylation of the RNA polymerase II C-terminal domain by Scp1.</title>
        <authorList>
            <person name="Zhang Y."/>
            <person name="Kim Y."/>
            <person name="Genoud N."/>
            <person name="Gao J."/>
            <person name="Kelly J.W."/>
            <person name="Pfaff S.L."/>
            <person name="Gill G.N."/>
            <person name="Dixon J.E."/>
            <person name="Noel J.P."/>
        </authorList>
    </citation>
    <scope>X-RAY CRYSTALLOGRAPHY (1.8 ANGSTROMS) OF 77-256 OF MUTANT ASN-96 IN COMPLEX WITH SUBSTRATE PEPTIDES AND MAGNESIUM</scope>
    <scope>CATALYTIC ACTIVITY</scope>
    <scope>SUBSTRATE SPECIFICITY</scope>
    <scope>ACTIVE SITE</scope>
</reference>
<keyword id="KW-0002">3D-structure</keyword>
<keyword id="KW-0007">Acetylation</keyword>
<keyword id="KW-0025">Alternative splicing</keyword>
<keyword id="KW-0378">Hydrolase</keyword>
<keyword id="KW-0460">Magnesium</keyword>
<keyword id="KW-0479">Metal-binding</keyword>
<keyword id="KW-0539">Nucleus</keyword>
<keyword id="KW-0904">Protein phosphatase</keyword>
<keyword id="KW-1267">Proteomics identification</keyword>
<keyword id="KW-1185">Reference proteome</keyword>
<accession>Q9GZU7</accession>
<accession>C9IYG0</accession>
<accession>Q7Z5Q3</accession>
<accession>Q7Z5Q4</accession>
<sequence>MDSSAVITQISKEEARGPLRGKGDQKSAASQKPRSRGILHSLFCCVCRDDGEALPAHSGAPLLVEENGAIPKQTPVQYLLPEAKAQDSDKICVVIDLDETLVHSSFKPVNNADFIIPVEIDGVVHQVYVLKRPHVDEFLQRMGELFECVLFTASLAKYADPVADLLDKWGAFRARLFRESCVFHRGNYVKDLSRLGRDLRRVLILDNSPASYVFHPDNAVPVASWFDNMSDTELHDLLPFFEQLSRVDDVYSVLRQPRPGS</sequence>
<evidence type="ECO:0000250" key="1"/>
<evidence type="ECO:0000255" key="2">
    <source>
        <dbReference type="PROSITE-ProRule" id="PRU00336"/>
    </source>
</evidence>
<evidence type="ECO:0000256" key="3">
    <source>
        <dbReference type="SAM" id="MobiDB-lite"/>
    </source>
</evidence>
<evidence type="ECO:0000269" key="4">
    <source>
    </source>
</evidence>
<evidence type="ECO:0000269" key="5">
    <source>
    </source>
</evidence>
<evidence type="ECO:0000269" key="6">
    <source>
    </source>
</evidence>
<evidence type="ECO:0000269" key="7">
    <source>
    </source>
</evidence>
<evidence type="ECO:0000303" key="8">
    <source>
    </source>
</evidence>
<evidence type="ECO:0000303" key="9">
    <source ref="3"/>
</evidence>
<evidence type="ECO:0000305" key="10"/>
<evidence type="ECO:0000305" key="11">
    <source>
    </source>
</evidence>
<evidence type="ECO:0007744" key="12">
    <source>
    </source>
</evidence>
<evidence type="ECO:0007829" key="13">
    <source>
        <dbReference type="PDB" id="1TA0"/>
    </source>
</evidence>
<evidence type="ECO:0007829" key="14">
    <source>
        <dbReference type="PDB" id="2GHT"/>
    </source>
</evidence>
<evidence type="ECO:0007829" key="15">
    <source>
        <dbReference type="PDB" id="3L0C"/>
    </source>
</evidence>
<evidence type="ECO:0007829" key="16">
    <source>
        <dbReference type="PDB" id="4YH1"/>
    </source>
</evidence>
<proteinExistence type="evidence at protein level"/>
<name>CTDS1_HUMAN</name>
<organism>
    <name type="scientific">Homo sapiens</name>
    <name type="common">Human</name>
    <dbReference type="NCBI Taxonomy" id="9606"/>
    <lineage>
        <taxon>Eukaryota</taxon>
        <taxon>Metazoa</taxon>
        <taxon>Chordata</taxon>
        <taxon>Craniata</taxon>
        <taxon>Vertebrata</taxon>
        <taxon>Euteleostomi</taxon>
        <taxon>Mammalia</taxon>
        <taxon>Eutheria</taxon>
        <taxon>Euarchontoglires</taxon>
        <taxon>Primates</taxon>
        <taxon>Haplorrhini</taxon>
        <taxon>Catarrhini</taxon>
        <taxon>Hominidae</taxon>
        <taxon>Homo</taxon>
    </lineage>
</organism>
<dbReference type="EC" id="3.1.3.16" evidence="4 7"/>
<dbReference type="EMBL" id="AF229163">
    <property type="protein sequence ID" value="AAG15404.1"/>
    <property type="molecule type" value="Genomic_DNA"/>
</dbReference>
<dbReference type="EMBL" id="AF229162">
    <property type="protein sequence ID" value="AAG15402.1"/>
    <property type="molecule type" value="mRNA"/>
</dbReference>
<dbReference type="EMBL" id="AY279529">
    <property type="protein sequence ID" value="AAP34397.1"/>
    <property type="molecule type" value="mRNA"/>
</dbReference>
<dbReference type="EMBL" id="AY279530">
    <property type="protein sequence ID" value="AAP34398.1"/>
    <property type="status" value="ALT_FRAME"/>
    <property type="molecule type" value="mRNA"/>
</dbReference>
<dbReference type="EMBL" id="BX446444">
    <property type="status" value="NOT_ANNOTATED_CDS"/>
    <property type="molecule type" value="mRNA"/>
</dbReference>
<dbReference type="EMBL" id="AC021016">
    <property type="status" value="NOT_ANNOTATED_CDS"/>
    <property type="molecule type" value="Genomic_DNA"/>
</dbReference>
<dbReference type="EMBL" id="BC012977">
    <property type="protein sequence ID" value="AAH12977.1"/>
    <property type="molecule type" value="mRNA"/>
</dbReference>
<dbReference type="CCDS" id="CCDS2416.1">
    <molecule id="Q9GZU7-1"/>
</dbReference>
<dbReference type="CCDS" id="CCDS56166.1">
    <molecule id="Q9GZU7-3"/>
</dbReference>
<dbReference type="RefSeq" id="NP_001193807.1">
    <molecule id="Q9GZU7-3"/>
    <property type="nucleotide sequence ID" value="NM_001206878.2"/>
</dbReference>
<dbReference type="RefSeq" id="NP_001387197.1">
    <molecule id="Q9GZU7-2"/>
    <property type="nucleotide sequence ID" value="NM_001400268.1"/>
</dbReference>
<dbReference type="RefSeq" id="NP_067021.1">
    <molecule id="Q9GZU7-1"/>
    <property type="nucleotide sequence ID" value="NM_021198.3"/>
</dbReference>
<dbReference type="RefSeq" id="NP_872580.1">
    <molecule id="Q9GZU7-2"/>
    <property type="nucleotide sequence ID" value="NM_182642.3"/>
</dbReference>
<dbReference type="PDB" id="1T9Z">
    <property type="method" value="X-ray"/>
    <property type="resolution" value="2.30 A"/>
    <property type="chains" value="A=77-261"/>
</dbReference>
<dbReference type="PDB" id="1TA0">
    <property type="method" value="X-ray"/>
    <property type="resolution" value="2.10 A"/>
    <property type="chains" value="A=77-261"/>
</dbReference>
<dbReference type="PDB" id="2GHQ">
    <property type="method" value="X-ray"/>
    <property type="resolution" value="2.05 A"/>
    <property type="chains" value="A/B=77-256"/>
</dbReference>
<dbReference type="PDB" id="2GHT">
    <property type="method" value="X-ray"/>
    <property type="resolution" value="1.80 A"/>
    <property type="chains" value="A/B=77-256"/>
</dbReference>
<dbReference type="PDB" id="3L0B">
    <property type="method" value="X-ray"/>
    <property type="resolution" value="2.35 A"/>
    <property type="chains" value="A/B=77-256"/>
</dbReference>
<dbReference type="PDB" id="3L0C">
    <property type="method" value="X-ray"/>
    <property type="resolution" value="2.45 A"/>
    <property type="chains" value="A/B=77-256"/>
</dbReference>
<dbReference type="PDB" id="3L0Y">
    <property type="method" value="X-ray"/>
    <property type="resolution" value="2.30 A"/>
    <property type="chains" value="A/B=77-256"/>
</dbReference>
<dbReference type="PDB" id="3PGL">
    <property type="method" value="X-ray"/>
    <property type="resolution" value="2.35 A"/>
    <property type="chains" value="A/B=77-256"/>
</dbReference>
<dbReference type="PDB" id="4YGY">
    <property type="method" value="X-ray"/>
    <property type="resolution" value="2.36 A"/>
    <property type="chains" value="A/B=77-261"/>
</dbReference>
<dbReference type="PDB" id="4YH1">
    <property type="method" value="X-ray"/>
    <property type="resolution" value="2.20 A"/>
    <property type="chains" value="A/B=77-255"/>
</dbReference>
<dbReference type="PDB" id="6DU3">
    <property type="method" value="X-ray"/>
    <property type="resolution" value="2.58 A"/>
    <property type="chains" value="A/B=77-256"/>
</dbReference>
<dbReference type="PDBsum" id="1T9Z"/>
<dbReference type="PDBsum" id="1TA0"/>
<dbReference type="PDBsum" id="2GHQ"/>
<dbReference type="PDBsum" id="2GHT"/>
<dbReference type="PDBsum" id="3L0B"/>
<dbReference type="PDBsum" id="3L0C"/>
<dbReference type="PDBsum" id="3L0Y"/>
<dbReference type="PDBsum" id="3PGL"/>
<dbReference type="PDBsum" id="4YGY"/>
<dbReference type="PDBsum" id="4YH1"/>
<dbReference type="PDBsum" id="6DU3"/>
<dbReference type="SMR" id="Q9GZU7"/>
<dbReference type="BioGRID" id="121804">
    <property type="interactions" value="117"/>
</dbReference>
<dbReference type="CORUM" id="Q9GZU7"/>
<dbReference type="DIP" id="DIP-61246N"/>
<dbReference type="FunCoup" id="Q9GZU7">
    <property type="interactions" value="1989"/>
</dbReference>
<dbReference type="IntAct" id="Q9GZU7">
    <property type="interactions" value="84"/>
</dbReference>
<dbReference type="MINT" id="Q9GZU7"/>
<dbReference type="STRING" id="9606.ENSP00000273062"/>
<dbReference type="BindingDB" id="Q9GZU7"/>
<dbReference type="ChEMBL" id="CHEMBL1795098"/>
<dbReference type="DrugBank" id="DB04156">
    <property type="generic name" value="Aspartate beryllium trifluoride"/>
</dbReference>
<dbReference type="DrugBank" id="DB04272">
    <property type="generic name" value="Citric acid"/>
</dbReference>
<dbReference type="DEPOD" id="CTDSP1"/>
<dbReference type="GlyCosmos" id="Q9GZU7">
    <property type="glycosylation" value="1 site, 1 glycan"/>
</dbReference>
<dbReference type="GlyGen" id="Q9GZU7">
    <property type="glycosylation" value="1 site, 1 O-linked glycan (1 site)"/>
</dbReference>
<dbReference type="iPTMnet" id="Q9GZU7"/>
<dbReference type="PhosphoSitePlus" id="Q9GZU7"/>
<dbReference type="SwissPalm" id="Q9GZU7"/>
<dbReference type="BioMuta" id="CTDSP1"/>
<dbReference type="DMDM" id="17865510"/>
<dbReference type="jPOST" id="Q9GZU7"/>
<dbReference type="MassIVE" id="Q9GZU7"/>
<dbReference type="PaxDb" id="9606-ENSP00000273062"/>
<dbReference type="PeptideAtlas" id="Q9GZU7"/>
<dbReference type="ProteomicsDB" id="7655"/>
<dbReference type="ProteomicsDB" id="80150">
    <molecule id="Q9GZU7-1"/>
</dbReference>
<dbReference type="ProteomicsDB" id="80151">
    <molecule id="Q9GZU7-2"/>
</dbReference>
<dbReference type="Pumba" id="Q9GZU7"/>
<dbReference type="Antibodypedia" id="34272">
    <property type="antibodies" value="424 antibodies from 32 providers"/>
</dbReference>
<dbReference type="DNASU" id="58190"/>
<dbReference type="Ensembl" id="ENST00000273062.7">
    <molecule id="Q9GZU7-1"/>
    <property type="protein sequence ID" value="ENSP00000273062.2"/>
    <property type="gene ID" value="ENSG00000144579.9"/>
</dbReference>
<dbReference type="Ensembl" id="ENST00000710837.1">
    <molecule id="Q9GZU7-2"/>
    <property type="protein sequence ID" value="ENSP00000518515.1"/>
    <property type="gene ID" value="ENSG00000144579.9"/>
</dbReference>
<dbReference type="GeneID" id="58190"/>
<dbReference type="KEGG" id="hsa:58190"/>
<dbReference type="MANE-Select" id="ENST00000273062.7">
    <property type="protein sequence ID" value="ENSP00000273062.2"/>
    <property type="RefSeq nucleotide sequence ID" value="NM_021198.3"/>
    <property type="RefSeq protein sequence ID" value="NP_067021.1"/>
</dbReference>
<dbReference type="UCSC" id="uc002vhy.3">
    <molecule id="Q9GZU7-1"/>
    <property type="organism name" value="human"/>
</dbReference>
<dbReference type="AGR" id="HGNC:21614"/>
<dbReference type="CTD" id="58190"/>
<dbReference type="DisGeNET" id="58190"/>
<dbReference type="GeneCards" id="CTDSP1"/>
<dbReference type="HGNC" id="HGNC:21614">
    <property type="gene designation" value="CTDSP1"/>
</dbReference>
<dbReference type="HPA" id="ENSG00000144579">
    <property type="expression patterns" value="Low tissue specificity"/>
</dbReference>
<dbReference type="MIM" id="605323">
    <property type="type" value="gene"/>
</dbReference>
<dbReference type="neXtProt" id="NX_Q9GZU7"/>
<dbReference type="OpenTargets" id="ENSG00000144579"/>
<dbReference type="PharmGKB" id="PA134938848"/>
<dbReference type="VEuPathDB" id="HostDB:ENSG00000144579"/>
<dbReference type="eggNOG" id="KOG1605">
    <property type="taxonomic scope" value="Eukaryota"/>
</dbReference>
<dbReference type="GeneTree" id="ENSGT01040000240451"/>
<dbReference type="InParanoid" id="Q9GZU7"/>
<dbReference type="OMA" id="MDLIPFF"/>
<dbReference type="OrthoDB" id="277011at2759"/>
<dbReference type="PAN-GO" id="Q9GZU7">
    <property type="GO annotations" value="1 GO annotation based on evolutionary models"/>
</dbReference>
<dbReference type="PhylomeDB" id="Q9GZU7"/>
<dbReference type="TreeFam" id="TF313556"/>
<dbReference type="PathwayCommons" id="Q9GZU7"/>
<dbReference type="SignaLink" id="Q9GZU7"/>
<dbReference type="SIGNOR" id="Q9GZU7"/>
<dbReference type="BioGRID-ORCS" id="58190">
    <property type="hits" value="32 hits in 1176 CRISPR screens"/>
</dbReference>
<dbReference type="ChiTaRS" id="CTDSP1">
    <property type="organism name" value="human"/>
</dbReference>
<dbReference type="EvolutionaryTrace" id="Q9GZU7"/>
<dbReference type="GeneWiki" id="CTDSP1"/>
<dbReference type="GenomeRNAi" id="58190"/>
<dbReference type="Pharos" id="Q9GZU7">
    <property type="development level" value="Tchem"/>
</dbReference>
<dbReference type="PRO" id="PR:Q9GZU7"/>
<dbReference type="Proteomes" id="UP000005640">
    <property type="component" value="Chromosome 2"/>
</dbReference>
<dbReference type="RNAct" id="Q9GZU7">
    <property type="molecule type" value="protein"/>
</dbReference>
<dbReference type="Bgee" id="ENSG00000144579">
    <property type="expression patterns" value="Expressed in granulocyte and 187 other cell types or tissues"/>
</dbReference>
<dbReference type="ExpressionAtlas" id="Q9GZU7">
    <property type="expression patterns" value="baseline and differential"/>
</dbReference>
<dbReference type="GO" id="GO:0070062">
    <property type="term" value="C:extracellular exosome"/>
    <property type="evidence" value="ECO:0007005"/>
    <property type="project" value="UniProtKB"/>
</dbReference>
<dbReference type="GO" id="GO:0005654">
    <property type="term" value="C:nucleoplasm"/>
    <property type="evidence" value="ECO:0000314"/>
    <property type="project" value="HPA"/>
</dbReference>
<dbReference type="GO" id="GO:0005634">
    <property type="term" value="C:nucleus"/>
    <property type="evidence" value="ECO:0000314"/>
    <property type="project" value="UniProtKB"/>
</dbReference>
<dbReference type="GO" id="GO:0046872">
    <property type="term" value="F:metal ion binding"/>
    <property type="evidence" value="ECO:0007669"/>
    <property type="project" value="UniProtKB-KW"/>
</dbReference>
<dbReference type="GO" id="GO:0008420">
    <property type="term" value="F:RNA polymerase II CTD heptapeptide repeat phosphatase activity"/>
    <property type="evidence" value="ECO:0000314"/>
    <property type="project" value="UniProtKB"/>
</dbReference>
<dbReference type="GO" id="GO:2000134">
    <property type="term" value="P:negative regulation of G1/S transition of mitotic cell cycle"/>
    <property type="evidence" value="ECO:0007669"/>
    <property type="project" value="Ensembl"/>
</dbReference>
<dbReference type="GO" id="GO:0050768">
    <property type="term" value="P:negative regulation of neurogenesis"/>
    <property type="evidence" value="ECO:0007669"/>
    <property type="project" value="Ensembl"/>
</dbReference>
<dbReference type="GO" id="GO:0045665">
    <property type="term" value="P:negative regulation of neuron differentiation"/>
    <property type="evidence" value="ECO:0007669"/>
    <property type="project" value="Ensembl"/>
</dbReference>
<dbReference type="GO" id="GO:0006470">
    <property type="term" value="P:protein dephosphorylation"/>
    <property type="evidence" value="ECO:0000314"/>
    <property type="project" value="UniProtKB"/>
</dbReference>
<dbReference type="GO" id="GO:0006357">
    <property type="term" value="P:regulation of transcription by RNA polymerase II"/>
    <property type="evidence" value="ECO:0000314"/>
    <property type="project" value="UniProtKB"/>
</dbReference>
<dbReference type="CDD" id="cd07521">
    <property type="entry name" value="HAD_FCP1-like"/>
    <property type="match status" value="1"/>
</dbReference>
<dbReference type="FunFam" id="3.40.50.1000:FF:000013">
    <property type="entry name" value="Carboxy-terminal domain RNA polymerase II polypeptide A small"/>
    <property type="match status" value="1"/>
</dbReference>
<dbReference type="Gene3D" id="3.40.50.1000">
    <property type="entry name" value="HAD superfamily/HAD-like"/>
    <property type="match status" value="1"/>
</dbReference>
<dbReference type="IDEAL" id="IID00394"/>
<dbReference type="InterPro" id="IPR011948">
    <property type="entry name" value="Dullard_phosphatase"/>
</dbReference>
<dbReference type="InterPro" id="IPR004274">
    <property type="entry name" value="FCP1_dom"/>
</dbReference>
<dbReference type="InterPro" id="IPR036412">
    <property type="entry name" value="HAD-like_sf"/>
</dbReference>
<dbReference type="InterPro" id="IPR023214">
    <property type="entry name" value="HAD_sf"/>
</dbReference>
<dbReference type="InterPro" id="IPR040078">
    <property type="entry name" value="RNA_Pol_CTD_Phosphatase"/>
</dbReference>
<dbReference type="InterPro" id="IPR050365">
    <property type="entry name" value="TIM50"/>
</dbReference>
<dbReference type="NCBIfam" id="TIGR02251">
    <property type="entry name" value="HIF-SF_euk"/>
    <property type="match status" value="1"/>
</dbReference>
<dbReference type="PANTHER" id="PTHR12210">
    <property type="entry name" value="DULLARD PROTEIN PHOSPHATASE"/>
    <property type="match status" value="1"/>
</dbReference>
<dbReference type="Pfam" id="PF03031">
    <property type="entry name" value="NIF"/>
    <property type="match status" value="1"/>
</dbReference>
<dbReference type="SFLD" id="SFLDG01124">
    <property type="entry name" value="C0.1:_RNA_Pol_CTD_Phosphatase"/>
    <property type="match status" value="1"/>
</dbReference>
<dbReference type="SFLD" id="SFLDS00003">
    <property type="entry name" value="Haloacid_Dehalogenase"/>
    <property type="match status" value="1"/>
</dbReference>
<dbReference type="SMART" id="SM00577">
    <property type="entry name" value="CPDc"/>
    <property type="match status" value="1"/>
</dbReference>
<dbReference type="SUPFAM" id="SSF56784">
    <property type="entry name" value="HAD-like"/>
    <property type="match status" value="1"/>
</dbReference>
<dbReference type="PROSITE" id="PS50969">
    <property type="entry name" value="FCP1"/>
    <property type="match status" value="1"/>
</dbReference>
<feature type="chain" id="PRO_0000212572" description="Carboxy-terminal domain RNA polymerase II polypeptide A small phosphatase 1">
    <location>
        <begin position="1"/>
        <end position="261"/>
    </location>
</feature>
<feature type="domain" description="FCP1 homology" evidence="2">
    <location>
        <begin position="86"/>
        <end position="244"/>
    </location>
</feature>
<feature type="region of interest" description="Disordered" evidence="3">
    <location>
        <begin position="1"/>
        <end position="33"/>
    </location>
</feature>
<feature type="compositionally biased region" description="Polar residues" evidence="3">
    <location>
        <begin position="1"/>
        <end position="10"/>
    </location>
</feature>
<feature type="compositionally biased region" description="Basic and acidic residues" evidence="3">
    <location>
        <begin position="11"/>
        <end position="25"/>
    </location>
</feature>
<feature type="active site" description="4-aspartylphosphate intermediate" evidence="5 7">
    <location>
        <position position="96"/>
    </location>
</feature>
<feature type="active site" description="Proton donor" evidence="11">
    <location>
        <position position="98"/>
    </location>
</feature>
<feature type="binding site" evidence="5">
    <location>
        <position position="96"/>
    </location>
    <ligand>
        <name>Mg(2+)</name>
        <dbReference type="ChEBI" id="CHEBI:18420"/>
    </ligand>
</feature>
<feature type="binding site" evidence="5">
    <location>
        <position position="98"/>
    </location>
    <ligand>
        <name>Mg(2+)</name>
        <dbReference type="ChEBI" id="CHEBI:18420"/>
    </ligand>
</feature>
<feature type="binding site" evidence="5">
    <location>
        <position position="207"/>
    </location>
    <ligand>
        <name>Mg(2+)</name>
        <dbReference type="ChEBI" id="CHEBI:18420"/>
    </ligand>
</feature>
<feature type="site" description="Transition state stabilizer" evidence="11">
    <location>
        <position position="152"/>
    </location>
</feature>
<feature type="site" description="Transition state stabilizer" evidence="11">
    <location>
        <position position="190"/>
    </location>
</feature>
<feature type="modified residue" description="N-acetylmethionine" evidence="12">
    <location>
        <position position="1"/>
    </location>
</feature>
<feature type="splice variant" id="VSP_045865" description="In isoform 3." evidence="9">
    <original>MDSSAVITQISKEEARGPLRGK</original>
    <variation>MVAAPWATQEQEEGRGIQPGDR</variation>
    <location>
        <begin position="1"/>
        <end position="22"/>
    </location>
</feature>
<feature type="splice variant" id="VSP_045866" description="In isoform 2 and isoform 3." evidence="8 9">
    <location>
        <position position="73"/>
    </location>
</feature>
<feature type="sequence variant" id="VAR_049054" description="In dbSNP:rs2227249.">
    <original>A</original>
    <variation>T</variation>
    <location>
        <position position="56"/>
    </location>
</feature>
<feature type="mutagenesis site" description="No effect. Completely abolishes phosphatase activity; when associated with N-98." evidence="4">
    <original>D</original>
    <variation>E</variation>
    <location>
        <position position="96"/>
    </location>
</feature>
<feature type="mutagenesis site" description="Completely abolishes phosphatase activity; when associated with E-96." evidence="4">
    <original>D</original>
    <variation>N</variation>
    <location>
        <position position="98"/>
    </location>
</feature>
<feature type="sequence conflict" description="In Ref. 3; BX446444." evidence="10" ref="3">
    <original>S</original>
    <variation>F</variation>
    <location>
        <position position="180"/>
    </location>
</feature>
<feature type="helix" evidence="14">
    <location>
        <begin position="85"/>
        <end position="87"/>
    </location>
</feature>
<feature type="strand" evidence="14">
    <location>
        <begin position="92"/>
        <end position="95"/>
    </location>
</feature>
<feature type="turn" evidence="14">
    <location>
        <begin position="99"/>
        <end position="101"/>
    </location>
</feature>
<feature type="strand" evidence="14">
    <location>
        <begin position="102"/>
        <end position="107"/>
    </location>
</feature>
<feature type="strand" evidence="14">
    <location>
        <begin position="113"/>
        <end position="120"/>
    </location>
</feature>
<feature type="strand" evidence="14">
    <location>
        <begin position="123"/>
        <end position="131"/>
    </location>
</feature>
<feature type="helix" evidence="14">
    <location>
        <begin position="135"/>
        <end position="145"/>
    </location>
</feature>
<feature type="strand" evidence="14">
    <location>
        <begin position="146"/>
        <end position="151"/>
    </location>
</feature>
<feature type="helix" evidence="14">
    <location>
        <begin position="156"/>
        <end position="166"/>
    </location>
</feature>
<feature type="strand" evidence="14">
    <location>
        <begin position="172"/>
        <end position="176"/>
    </location>
</feature>
<feature type="helix" evidence="14">
    <location>
        <begin position="178"/>
        <end position="180"/>
    </location>
</feature>
<feature type="strand" evidence="14">
    <location>
        <begin position="181"/>
        <end position="184"/>
    </location>
</feature>
<feature type="strand" evidence="14">
    <location>
        <begin position="187"/>
        <end position="189"/>
    </location>
</feature>
<feature type="helix" evidence="14">
    <location>
        <begin position="192"/>
        <end position="194"/>
    </location>
</feature>
<feature type="strand" evidence="15">
    <location>
        <begin position="195"/>
        <end position="197"/>
    </location>
</feature>
<feature type="helix" evidence="14">
    <location>
        <begin position="199"/>
        <end position="201"/>
    </location>
</feature>
<feature type="strand" evidence="14">
    <location>
        <begin position="202"/>
        <end position="205"/>
    </location>
</feature>
<feature type="helix" evidence="14">
    <location>
        <begin position="209"/>
        <end position="212"/>
    </location>
</feature>
<feature type="helix" evidence="13">
    <location>
        <begin position="216"/>
        <end position="218"/>
    </location>
</feature>
<feature type="strand" evidence="16">
    <location>
        <begin position="219"/>
        <end position="221"/>
    </location>
</feature>
<feature type="helix" evidence="14">
    <location>
        <begin position="233"/>
        <end position="244"/>
    </location>
</feature>
<feature type="helix" evidence="14">
    <location>
        <begin position="251"/>
        <end position="254"/>
    </location>
</feature>